<reference key="1">
    <citation type="journal article" date="2005" name="Arch. Microbiol.">
        <title>The genome sequence of an anaerobic aromatic-degrading denitrifying bacterium, strain EbN1.</title>
        <authorList>
            <person name="Rabus R."/>
            <person name="Kube M."/>
            <person name="Heider J."/>
            <person name="Beck A."/>
            <person name="Heitmann K."/>
            <person name="Widdel F."/>
            <person name="Reinhardt R."/>
        </authorList>
    </citation>
    <scope>NUCLEOTIDE SEQUENCE [LARGE SCALE GENOMIC DNA]</scope>
    <source>
        <strain>DSM 19018 / LMG 30748 / EbN1</strain>
    </source>
</reference>
<sequence length="312" mass="33762">MSAAPQHVTVLLAEAVEALAIRPGGVYVDGTFGRGGHSRAILAKLDADGRLIAFDRDPRAIEVARALPDPRLTAVHAPFSAFAEELDRLGLEHVDGVLLDLGVSSPQLDEAARGMSFRFDAPLDMRMDTSRGQTVAQWLADASVAQITEVLRDYGEERFAYAIAKAIAAARAGGAVASTRQLAEIVEKAVRTREPGQHPATRSFQALRIFINQELEELSLVLPAAVERLKPGGRLVAISFHSLEDRIVKRFMRDESRPPQLPSRLPLRAAELPQPRLRLVGKSQRPGPGEVAANPRSRSAVMRVAERTGGAA</sequence>
<feature type="chain" id="PRO_0000108567" description="Ribosomal RNA small subunit methyltransferase H">
    <location>
        <begin position="1"/>
        <end position="312"/>
    </location>
</feature>
<feature type="region of interest" description="Disordered" evidence="2">
    <location>
        <begin position="279"/>
        <end position="312"/>
    </location>
</feature>
<feature type="binding site" evidence="1">
    <location>
        <begin position="35"/>
        <end position="37"/>
    </location>
    <ligand>
        <name>S-adenosyl-L-methionine</name>
        <dbReference type="ChEBI" id="CHEBI:59789"/>
    </ligand>
</feature>
<feature type="binding site" evidence="1">
    <location>
        <position position="55"/>
    </location>
    <ligand>
        <name>S-adenosyl-L-methionine</name>
        <dbReference type="ChEBI" id="CHEBI:59789"/>
    </ligand>
</feature>
<feature type="binding site" evidence="1">
    <location>
        <position position="79"/>
    </location>
    <ligand>
        <name>S-adenosyl-L-methionine</name>
        <dbReference type="ChEBI" id="CHEBI:59789"/>
    </ligand>
</feature>
<feature type="binding site" evidence="1">
    <location>
        <position position="100"/>
    </location>
    <ligand>
        <name>S-adenosyl-L-methionine</name>
        <dbReference type="ChEBI" id="CHEBI:59789"/>
    </ligand>
</feature>
<feature type="binding site" evidence="1">
    <location>
        <position position="107"/>
    </location>
    <ligand>
        <name>S-adenosyl-L-methionine</name>
        <dbReference type="ChEBI" id="CHEBI:59789"/>
    </ligand>
</feature>
<name>RSMH_AROAE</name>
<gene>
    <name evidence="1" type="primary">rsmH</name>
    <name type="synonym">mraW</name>
    <name type="ordered locus">AZOSEA07990</name>
    <name type="ORF">ebA1452</name>
</gene>
<dbReference type="EC" id="2.1.1.199" evidence="1"/>
<dbReference type="EMBL" id="CR555306">
    <property type="protein sequence ID" value="CAI06922.1"/>
    <property type="molecule type" value="Genomic_DNA"/>
</dbReference>
<dbReference type="RefSeq" id="WP_011236650.1">
    <property type="nucleotide sequence ID" value="NC_006513.1"/>
</dbReference>
<dbReference type="SMR" id="Q5P6Y9"/>
<dbReference type="STRING" id="76114.ebA1452"/>
<dbReference type="KEGG" id="eba:ebA1452"/>
<dbReference type="eggNOG" id="COG0275">
    <property type="taxonomic scope" value="Bacteria"/>
</dbReference>
<dbReference type="HOGENOM" id="CLU_038422_2_0_4"/>
<dbReference type="OrthoDB" id="9806637at2"/>
<dbReference type="Proteomes" id="UP000006552">
    <property type="component" value="Chromosome"/>
</dbReference>
<dbReference type="GO" id="GO:0005737">
    <property type="term" value="C:cytoplasm"/>
    <property type="evidence" value="ECO:0007669"/>
    <property type="project" value="UniProtKB-SubCell"/>
</dbReference>
<dbReference type="GO" id="GO:0071424">
    <property type="term" value="F:rRNA (cytosine-N4-)-methyltransferase activity"/>
    <property type="evidence" value="ECO:0007669"/>
    <property type="project" value="UniProtKB-UniRule"/>
</dbReference>
<dbReference type="GO" id="GO:0070475">
    <property type="term" value="P:rRNA base methylation"/>
    <property type="evidence" value="ECO:0007669"/>
    <property type="project" value="UniProtKB-UniRule"/>
</dbReference>
<dbReference type="Gene3D" id="1.10.150.170">
    <property type="entry name" value="Putative methyltransferase TM0872, insert domain"/>
    <property type="match status" value="1"/>
</dbReference>
<dbReference type="Gene3D" id="3.40.50.150">
    <property type="entry name" value="Vaccinia Virus protein VP39"/>
    <property type="match status" value="1"/>
</dbReference>
<dbReference type="HAMAP" id="MF_01007">
    <property type="entry name" value="16SrRNA_methyltr_H"/>
    <property type="match status" value="1"/>
</dbReference>
<dbReference type="InterPro" id="IPR002903">
    <property type="entry name" value="RsmH"/>
</dbReference>
<dbReference type="InterPro" id="IPR023397">
    <property type="entry name" value="SAM-dep_MeTrfase_MraW_recog"/>
</dbReference>
<dbReference type="InterPro" id="IPR029063">
    <property type="entry name" value="SAM-dependent_MTases_sf"/>
</dbReference>
<dbReference type="NCBIfam" id="TIGR00006">
    <property type="entry name" value="16S rRNA (cytosine(1402)-N(4))-methyltransferase RsmH"/>
    <property type="match status" value="1"/>
</dbReference>
<dbReference type="PANTHER" id="PTHR11265:SF0">
    <property type="entry name" value="12S RRNA N4-METHYLCYTIDINE METHYLTRANSFERASE"/>
    <property type="match status" value="1"/>
</dbReference>
<dbReference type="PANTHER" id="PTHR11265">
    <property type="entry name" value="S-ADENOSYL-METHYLTRANSFERASE MRAW"/>
    <property type="match status" value="1"/>
</dbReference>
<dbReference type="Pfam" id="PF01795">
    <property type="entry name" value="Methyltransf_5"/>
    <property type="match status" value="1"/>
</dbReference>
<dbReference type="PIRSF" id="PIRSF004486">
    <property type="entry name" value="MraW"/>
    <property type="match status" value="1"/>
</dbReference>
<dbReference type="SUPFAM" id="SSF81799">
    <property type="entry name" value="Putative methyltransferase TM0872, insert domain"/>
    <property type="match status" value="1"/>
</dbReference>
<dbReference type="SUPFAM" id="SSF53335">
    <property type="entry name" value="S-adenosyl-L-methionine-dependent methyltransferases"/>
    <property type="match status" value="1"/>
</dbReference>
<comment type="function">
    <text evidence="1">Specifically methylates the N4 position of cytidine in position 1402 (C1402) of 16S rRNA.</text>
</comment>
<comment type="catalytic activity">
    <reaction evidence="1">
        <text>cytidine(1402) in 16S rRNA + S-adenosyl-L-methionine = N(4)-methylcytidine(1402) in 16S rRNA + S-adenosyl-L-homocysteine + H(+)</text>
        <dbReference type="Rhea" id="RHEA:42928"/>
        <dbReference type="Rhea" id="RHEA-COMP:10286"/>
        <dbReference type="Rhea" id="RHEA-COMP:10287"/>
        <dbReference type="ChEBI" id="CHEBI:15378"/>
        <dbReference type="ChEBI" id="CHEBI:57856"/>
        <dbReference type="ChEBI" id="CHEBI:59789"/>
        <dbReference type="ChEBI" id="CHEBI:74506"/>
        <dbReference type="ChEBI" id="CHEBI:82748"/>
        <dbReference type="EC" id="2.1.1.199"/>
    </reaction>
</comment>
<comment type="subcellular location">
    <subcellularLocation>
        <location evidence="1">Cytoplasm</location>
    </subcellularLocation>
</comment>
<comment type="similarity">
    <text evidence="1">Belongs to the methyltransferase superfamily. RsmH family.</text>
</comment>
<protein>
    <recommendedName>
        <fullName evidence="1">Ribosomal RNA small subunit methyltransferase H</fullName>
        <ecNumber evidence="1">2.1.1.199</ecNumber>
    </recommendedName>
    <alternativeName>
        <fullName evidence="1">16S rRNA m(4)C1402 methyltransferase</fullName>
    </alternativeName>
    <alternativeName>
        <fullName evidence="1">rRNA (cytosine-N(4)-)-methyltransferase RsmH</fullName>
    </alternativeName>
</protein>
<evidence type="ECO:0000255" key="1">
    <source>
        <dbReference type="HAMAP-Rule" id="MF_01007"/>
    </source>
</evidence>
<evidence type="ECO:0000256" key="2">
    <source>
        <dbReference type="SAM" id="MobiDB-lite"/>
    </source>
</evidence>
<proteinExistence type="inferred from homology"/>
<organism>
    <name type="scientific">Aromatoleum aromaticum (strain DSM 19018 / LMG 30748 / EbN1)</name>
    <name type="common">Azoarcus sp. (strain EbN1)</name>
    <dbReference type="NCBI Taxonomy" id="76114"/>
    <lineage>
        <taxon>Bacteria</taxon>
        <taxon>Pseudomonadati</taxon>
        <taxon>Pseudomonadota</taxon>
        <taxon>Betaproteobacteria</taxon>
        <taxon>Rhodocyclales</taxon>
        <taxon>Rhodocyclaceae</taxon>
        <taxon>Aromatoleum</taxon>
    </lineage>
</organism>
<keyword id="KW-0963">Cytoplasm</keyword>
<keyword id="KW-0489">Methyltransferase</keyword>
<keyword id="KW-1185">Reference proteome</keyword>
<keyword id="KW-0698">rRNA processing</keyword>
<keyword id="KW-0949">S-adenosyl-L-methionine</keyword>
<keyword id="KW-0808">Transferase</keyword>
<accession>Q5P6Y9</accession>